<sequence length="64" mass="7418">MREIKIVLPELEDVVPEEFLEHMLKATKEILLAMRTLIDSGLDKIEAVEEITKAKKEIKKIEVE</sequence>
<feature type="chain" id="PRO_0000127978" description="Uncharacterized protein AF_1253">
    <location>
        <begin position="1"/>
        <end position="64"/>
    </location>
</feature>
<name>Y1253_ARCFU</name>
<protein>
    <recommendedName>
        <fullName>Uncharacterized protein AF_1253</fullName>
    </recommendedName>
</protein>
<reference key="1">
    <citation type="journal article" date="1997" name="Nature">
        <title>The complete genome sequence of the hyperthermophilic, sulphate-reducing archaeon Archaeoglobus fulgidus.</title>
        <authorList>
            <person name="Klenk H.-P."/>
            <person name="Clayton R.A."/>
            <person name="Tomb J.-F."/>
            <person name="White O."/>
            <person name="Nelson K.E."/>
            <person name="Ketchum K.A."/>
            <person name="Dodson R.J."/>
            <person name="Gwinn M.L."/>
            <person name="Hickey E.K."/>
            <person name="Peterson J.D."/>
            <person name="Richardson D.L."/>
            <person name="Kerlavage A.R."/>
            <person name="Graham D.E."/>
            <person name="Kyrpides N.C."/>
            <person name="Fleischmann R.D."/>
            <person name="Quackenbush J."/>
            <person name="Lee N.H."/>
            <person name="Sutton G.G."/>
            <person name="Gill S.R."/>
            <person name="Kirkness E.F."/>
            <person name="Dougherty B.A."/>
            <person name="McKenney K."/>
            <person name="Adams M.D."/>
            <person name="Loftus B.J."/>
            <person name="Peterson S.N."/>
            <person name="Reich C.I."/>
            <person name="McNeil L.K."/>
            <person name="Badger J.H."/>
            <person name="Glodek A."/>
            <person name="Zhou L."/>
            <person name="Overbeek R."/>
            <person name="Gocayne J.D."/>
            <person name="Weidman J.F."/>
            <person name="McDonald L.A."/>
            <person name="Utterback T.R."/>
            <person name="Cotton M.D."/>
            <person name="Spriggs T."/>
            <person name="Artiach P."/>
            <person name="Kaine B.P."/>
            <person name="Sykes S.M."/>
            <person name="Sadow P.W."/>
            <person name="D'Andrea K.P."/>
            <person name="Bowman C."/>
            <person name="Fujii C."/>
            <person name="Garland S.A."/>
            <person name="Mason T.M."/>
            <person name="Olsen G.J."/>
            <person name="Fraser C.M."/>
            <person name="Smith H.O."/>
            <person name="Woese C.R."/>
            <person name="Venter J.C."/>
        </authorList>
    </citation>
    <scope>NUCLEOTIDE SEQUENCE [LARGE SCALE GENOMIC DNA]</scope>
    <source>
        <strain>ATCC 49558 / DSM 4304 / JCM 9628 / NBRC 100126 / VC-16</strain>
    </source>
</reference>
<gene>
    <name type="ordered locus">AF_1253</name>
</gene>
<dbReference type="EMBL" id="AE000782">
    <property type="protein sequence ID" value="AAB90006.1"/>
    <property type="molecule type" value="Genomic_DNA"/>
</dbReference>
<dbReference type="PIR" id="D69406">
    <property type="entry name" value="D69406"/>
</dbReference>
<dbReference type="RefSeq" id="WP_010878748.1">
    <property type="nucleotide sequence ID" value="NC_000917.1"/>
</dbReference>
<dbReference type="SMR" id="O29015"/>
<dbReference type="STRING" id="224325.AF_1253"/>
<dbReference type="PaxDb" id="224325-AF_1253"/>
<dbReference type="EnsemblBacteria" id="AAB90006">
    <property type="protein sequence ID" value="AAB90006"/>
    <property type="gene ID" value="AF_1253"/>
</dbReference>
<dbReference type="KEGG" id="afu:AF_1253"/>
<dbReference type="eggNOG" id="arCOG10696">
    <property type="taxonomic scope" value="Archaea"/>
</dbReference>
<dbReference type="HOGENOM" id="CLU_206258_0_0_2"/>
<dbReference type="Proteomes" id="UP000002199">
    <property type="component" value="Chromosome"/>
</dbReference>
<organism>
    <name type="scientific">Archaeoglobus fulgidus (strain ATCC 49558 / DSM 4304 / JCM 9628 / NBRC 100126 / VC-16)</name>
    <dbReference type="NCBI Taxonomy" id="224325"/>
    <lineage>
        <taxon>Archaea</taxon>
        <taxon>Methanobacteriati</taxon>
        <taxon>Methanobacteriota</taxon>
        <taxon>Archaeoglobi</taxon>
        <taxon>Archaeoglobales</taxon>
        <taxon>Archaeoglobaceae</taxon>
        <taxon>Archaeoglobus</taxon>
    </lineage>
</organism>
<accession>O29015</accession>
<keyword id="KW-1185">Reference proteome</keyword>
<proteinExistence type="predicted"/>